<sequence length="140" mass="15931">MASKVDYQSGKKHGLQLKNQESELDSIAAEFAGELDEATLSKYKTQFMSYDINNSGDIDHYELQLLMEKINQPKTYLELKKMIEQVDSTGKGAINFRDFIKMMTGKTSSILQKILMFEEMGKKSEQPKGIPQKRSISDLP</sequence>
<organism>
    <name type="scientific">Dictyostelium discoideum</name>
    <name type="common">Social amoeba</name>
    <dbReference type="NCBI Taxonomy" id="44689"/>
    <lineage>
        <taxon>Eukaryota</taxon>
        <taxon>Amoebozoa</taxon>
        <taxon>Evosea</taxon>
        <taxon>Eumycetozoa</taxon>
        <taxon>Dictyostelia</taxon>
        <taxon>Dictyosteliales</taxon>
        <taxon>Dictyosteliaceae</taxon>
        <taxon>Dictyostelium</taxon>
    </lineage>
</organism>
<dbReference type="EMBL" id="AAFI02000055">
    <property type="protein sequence ID" value="EAL65644.1"/>
    <property type="molecule type" value="Genomic_DNA"/>
</dbReference>
<dbReference type="EMBL" id="AF020281">
    <property type="protein sequence ID" value="AAB70849.1"/>
    <property type="status" value="ALT_FRAME"/>
    <property type="molecule type" value="Genomic_DNA"/>
</dbReference>
<dbReference type="RefSeq" id="XP_639014.1">
    <property type="nucleotide sequence ID" value="XM_633922.1"/>
</dbReference>
<dbReference type="SMR" id="Q54QX0"/>
<dbReference type="STRING" id="44689.Q54QX0"/>
<dbReference type="PaxDb" id="44689-DDB0231553"/>
<dbReference type="EnsemblProtists" id="EAL65644">
    <property type="protein sequence ID" value="EAL65644"/>
    <property type="gene ID" value="DDB_G0283533"/>
</dbReference>
<dbReference type="GeneID" id="8624144"/>
<dbReference type="KEGG" id="ddi:DDB_G0283533"/>
<dbReference type="dictyBase" id="DDB_G0283533">
    <property type="gene designation" value="cbpB"/>
</dbReference>
<dbReference type="VEuPathDB" id="AmoebaDB:DDB_G0283533"/>
<dbReference type="eggNOG" id="KOG0027">
    <property type="taxonomic scope" value="Eukaryota"/>
</dbReference>
<dbReference type="HOGENOM" id="CLU_134149_0_0_1"/>
<dbReference type="InParanoid" id="Q54QX0"/>
<dbReference type="OMA" id="MDFGMSV"/>
<dbReference type="PhylomeDB" id="Q54QX0"/>
<dbReference type="PRO" id="PR:Q54QX0"/>
<dbReference type="Proteomes" id="UP000002195">
    <property type="component" value="Chromosome 4"/>
</dbReference>
<dbReference type="GO" id="GO:0051015">
    <property type="term" value="F:actin filament binding"/>
    <property type="evidence" value="ECO:0000318"/>
    <property type="project" value="GO_Central"/>
</dbReference>
<dbReference type="GO" id="GO:0005509">
    <property type="term" value="F:calcium ion binding"/>
    <property type="evidence" value="ECO:0000318"/>
    <property type="project" value="GO_Central"/>
</dbReference>
<dbReference type="GO" id="GO:0051017">
    <property type="term" value="P:actin filament bundle assembly"/>
    <property type="evidence" value="ECO:0000318"/>
    <property type="project" value="GO_Central"/>
</dbReference>
<dbReference type="GO" id="GO:0097178">
    <property type="term" value="P:ruffle assembly"/>
    <property type="evidence" value="ECO:0000318"/>
    <property type="project" value="GO_Central"/>
</dbReference>
<dbReference type="CDD" id="cd00051">
    <property type="entry name" value="EFh"/>
    <property type="match status" value="1"/>
</dbReference>
<dbReference type="FunFam" id="1.10.238.10:FF:000178">
    <property type="entry name" value="Calmodulin-2 A"/>
    <property type="match status" value="1"/>
</dbReference>
<dbReference type="Gene3D" id="1.10.238.10">
    <property type="entry name" value="EF-hand"/>
    <property type="match status" value="1"/>
</dbReference>
<dbReference type="InterPro" id="IPR049025">
    <property type="entry name" value="AIF-1_EF_pair"/>
</dbReference>
<dbReference type="InterPro" id="IPR042433">
    <property type="entry name" value="AIF1/AIF1L"/>
</dbReference>
<dbReference type="InterPro" id="IPR011992">
    <property type="entry name" value="EF-hand-dom_pair"/>
</dbReference>
<dbReference type="InterPro" id="IPR018247">
    <property type="entry name" value="EF_Hand_1_Ca_BS"/>
</dbReference>
<dbReference type="InterPro" id="IPR002048">
    <property type="entry name" value="EF_hand_dom"/>
</dbReference>
<dbReference type="PANTHER" id="PTHR10356">
    <property type="entry name" value="ALLOGRAFT INFLAMMATORY FACTOR-1"/>
    <property type="match status" value="1"/>
</dbReference>
<dbReference type="PANTHER" id="PTHR10356:SF0">
    <property type="entry name" value="CALCIUM-BINDING PROTEIN B"/>
    <property type="match status" value="1"/>
</dbReference>
<dbReference type="Pfam" id="PF21008">
    <property type="entry name" value="AIF-1"/>
    <property type="match status" value="1"/>
</dbReference>
<dbReference type="SMART" id="SM00054">
    <property type="entry name" value="EFh"/>
    <property type="match status" value="2"/>
</dbReference>
<dbReference type="SUPFAM" id="SSF47473">
    <property type="entry name" value="EF-hand"/>
    <property type="match status" value="1"/>
</dbReference>
<dbReference type="PROSITE" id="PS00018">
    <property type="entry name" value="EF_HAND_1"/>
    <property type="match status" value="1"/>
</dbReference>
<dbReference type="PROSITE" id="PS50222">
    <property type="entry name" value="EF_HAND_2"/>
    <property type="match status" value="2"/>
</dbReference>
<evidence type="ECO:0000255" key="1">
    <source>
        <dbReference type="PROSITE-ProRule" id="PRU00448"/>
    </source>
</evidence>
<evidence type="ECO:0000305" key="2"/>
<proteinExistence type="predicted"/>
<name>CBPB_DICDI</name>
<reference key="1">
    <citation type="journal article" date="2005" name="Nature">
        <title>The genome of the social amoeba Dictyostelium discoideum.</title>
        <authorList>
            <person name="Eichinger L."/>
            <person name="Pachebat J.A."/>
            <person name="Gloeckner G."/>
            <person name="Rajandream M.A."/>
            <person name="Sucgang R."/>
            <person name="Berriman M."/>
            <person name="Song J."/>
            <person name="Olsen R."/>
            <person name="Szafranski K."/>
            <person name="Xu Q."/>
            <person name="Tunggal B."/>
            <person name="Kummerfeld S."/>
            <person name="Madera M."/>
            <person name="Konfortov B.A."/>
            <person name="Rivero F."/>
            <person name="Bankier A.T."/>
            <person name="Lehmann R."/>
            <person name="Hamlin N."/>
            <person name="Davies R."/>
            <person name="Gaudet P."/>
            <person name="Fey P."/>
            <person name="Pilcher K."/>
            <person name="Chen G."/>
            <person name="Saunders D."/>
            <person name="Sodergren E.J."/>
            <person name="Davis P."/>
            <person name="Kerhornou A."/>
            <person name="Nie X."/>
            <person name="Hall N."/>
            <person name="Anjard C."/>
            <person name="Hemphill L."/>
            <person name="Bason N."/>
            <person name="Farbrother P."/>
            <person name="Desany B."/>
            <person name="Just E."/>
            <person name="Morio T."/>
            <person name="Rost R."/>
            <person name="Churcher C.M."/>
            <person name="Cooper J."/>
            <person name="Haydock S."/>
            <person name="van Driessche N."/>
            <person name="Cronin A."/>
            <person name="Goodhead I."/>
            <person name="Muzny D.M."/>
            <person name="Mourier T."/>
            <person name="Pain A."/>
            <person name="Lu M."/>
            <person name="Harper D."/>
            <person name="Lindsay R."/>
            <person name="Hauser H."/>
            <person name="James K.D."/>
            <person name="Quiles M."/>
            <person name="Madan Babu M."/>
            <person name="Saito T."/>
            <person name="Buchrieser C."/>
            <person name="Wardroper A."/>
            <person name="Felder M."/>
            <person name="Thangavelu M."/>
            <person name="Johnson D."/>
            <person name="Knights A."/>
            <person name="Loulseged H."/>
            <person name="Mungall K.L."/>
            <person name="Oliver K."/>
            <person name="Price C."/>
            <person name="Quail M.A."/>
            <person name="Urushihara H."/>
            <person name="Hernandez J."/>
            <person name="Rabbinowitsch E."/>
            <person name="Steffen D."/>
            <person name="Sanders M."/>
            <person name="Ma J."/>
            <person name="Kohara Y."/>
            <person name="Sharp S."/>
            <person name="Simmonds M.N."/>
            <person name="Spiegler S."/>
            <person name="Tivey A."/>
            <person name="Sugano S."/>
            <person name="White B."/>
            <person name="Walker D."/>
            <person name="Woodward J.R."/>
            <person name="Winckler T."/>
            <person name="Tanaka Y."/>
            <person name="Shaulsky G."/>
            <person name="Schleicher M."/>
            <person name="Weinstock G.M."/>
            <person name="Rosenthal A."/>
            <person name="Cox E.C."/>
            <person name="Chisholm R.L."/>
            <person name="Gibbs R.A."/>
            <person name="Loomis W.F."/>
            <person name="Platzer M."/>
            <person name="Kay R.R."/>
            <person name="Williams J.G."/>
            <person name="Dear P.H."/>
            <person name="Noegel A.A."/>
            <person name="Barrell B.G."/>
            <person name="Kuspa A."/>
        </authorList>
    </citation>
    <scope>NUCLEOTIDE SEQUENCE [LARGE SCALE GENOMIC DNA]</scope>
    <source>
        <strain>AX4</strain>
    </source>
</reference>
<reference key="2">
    <citation type="submission" date="1997-08" db="EMBL/GenBank/DDBJ databases">
        <authorList>
            <person name="Loomis W.F."/>
            <person name="Iranfar N."/>
        </authorList>
    </citation>
    <scope>NUCLEOTIDE SEQUENCE [GENOMIC DNA] OF 5-140</scope>
    <source>
        <strain>AX3</strain>
    </source>
</reference>
<keyword id="KW-0106">Calcium</keyword>
<keyword id="KW-0479">Metal-binding</keyword>
<keyword id="KW-1185">Reference proteome</keyword>
<keyword id="KW-0677">Repeat</keyword>
<comment type="sequence caution" evidence="2">
    <conflict type="frameshift">
        <sequence resource="EMBL-CDS" id="AAB70849"/>
    </conflict>
</comment>
<feature type="chain" id="PRO_0000312583" description="Calcium-binding protein B">
    <location>
        <begin position="1"/>
        <end position="140"/>
    </location>
</feature>
<feature type="domain" description="EF-hand 1" evidence="1">
    <location>
        <begin position="38"/>
        <end position="73"/>
    </location>
</feature>
<feature type="domain" description="EF-hand 2" evidence="1">
    <location>
        <begin position="74"/>
        <end position="109"/>
    </location>
</feature>
<feature type="binding site" evidence="1">
    <location>
        <position position="51"/>
    </location>
    <ligand>
        <name>Ca(2+)</name>
        <dbReference type="ChEBI" id="CHEBI:29108"/>
    </ligand>
</feature>
<feature type="binding site" evidence="1">
    <location>
        <position position="53"/>
    </location>
    <ligand>
        <name>Ca(2+)</name>
        <dbReference type="ChEBI" id="CHEBI:29108"/>
    </ligand>
</feature>
<feature type="binding site" evidence="1">
    <location>
        <position position="55"/>
    </location>
    <ligand>
        <name>Ca(2+)</name>
        <dbReference type="ChEBI" id="CHEBI:29108"/>
    </ligand>
</feature>
<feature type="binding site" evidence="1">
    <location>
        <position position="57"/>
    </location>
    <ligand>
        <name>Ca(2+)</name>
        <dbReference type="ChEBI" id="CHEBI:29108"/>
    </ligand>
</feature>
<feature type="binding site" evidence="1">
    <location>
        <position position="62"/>
    </location>
    <ligand>
        <name>Ca(2+)</name>
        <dbReference type="ChEBI" id="CHEBI:29108"/>
    </ligand>
</feature>
<protein>
    <recommendedName>
        <fullName>Calcium-binding protein B</fullName>
    </recommendedName>
</protein>
<gene>
    <name type="primary">cbpB</name>
    <name type="ORF">DDB_G0283533</name>
</gene>
<accession>Q54QX0</accession>
<accession>O15748</accession>